<comment type="catalytic activity">
    <reaction>
        <text>L-cysteine + L-glutamate + ATP = gamma-L-glutamyl-L-cysteine + ADP + phosphate + H(+)</text>
        <dbReference type="Rhea" id="RHEA:13285"/>
        <dbReference type="ChEBI" id="CHEBI:15378"/>
        <dbReference type="ChEBI" id="CHEBI:29985"/>
        <dbReference type="ChEBI" id="CHEBI:30616"/>
        <dbReference type="ChEBI" id="CHEBI:35235"/>
        <dbReference type="ChEBI" id="CHEBI:43474"/>
        <dbReference type="ChEBI" id="CHEBI:58173"/>
        <dbReference type="ChEBI" id="CHEBI:456216"/>
        <dbReference type="EC" id="6.3.2.2"/>
    </reaction>
</comment>
<comment type="pathway">
    <text>Sulfur metabolism; glutathione biosynthesis; glutathione from L-cysteine and L-glutamate: step 1/2.</text>
</comment>
<comment type="subunit">
    <text evidence="1">Homodimer or monomer when oxidized or reduced, respectively.</text>
</comment>
<comment type="subcellular location">
    <subcellularLocation>
        <location evidence="1">Plastid</location>
        <location evidence="1">Chloroplast</location>
    </subcellularLocation>
</comment>
<comment type="PTM">
    <text evidence="1">The Cys-187-Cys-407 disulfide bridge is known to modulate the enzyme activity according to the redox status. The oxidized form constitutes the active enzyme (By similarity).</text>
</comment>
<comment type="similarity">
    <text evidence="3">Belongs to the carboxylate-amine ligase family. Glutamate--cysteine ligase type 2 subfamily.</text>
</comment>
<feature type="transit peptide" description="Chloroplast" evidence="2">
    <location>
        <begin position="1"/>
        <end status="unknown"/>
    </location>
</feature>
<feature type="chain" id="PRO_0000013056" description="Glutamate--cysteine ligase, chloroplastic">
    <location>
        <begin status="unknown"/>
        <end position="523"/>
    </location>
</feature>
<feature type="disulfide bond" evidence="1">
    <location>
        <begin position="187"/>
        <end position="407"/>
    </location>
</feature>
<evidence type="ECO:0000250" key="1"/>
<evidence type="ECO:0000255" key="2"/>
<evidence type="ECO:0000305" key="3"/>
<accession>O22493</accession>
<reference key="1">
    <citation type="submission" date="1997-08" db="EMBL/GenBank/DDBJ databases">
        <authorList>
            <person name="Kovari I.A."/>
            <person name="Goldsbrough P.B."/>
        </authorList>
    </citation>
    <scope>NUCLEOTIDE SEQUENCE [MRNA]</scope>
    <source>
        <strain>cv. Ohio state 4</strain>
    </source>
</reference>
<gene>
    <name type="primary">GSH1</name>
</gene>
<sequence length="523" mass="59057">MALMSQAGSSHCIYSEKVRCISGHRSIINNMDMFRMREICFGVDISSRNASRRVQGNYLNHIGVGSRRGDLTIVAASPPTEDAVVAAEPLTKEDLVGYLASGCKSKEKWRIGTEHEKFGFEFGTLRPMKYDQIADLLNGIAERFDWEKVMEGDKIIGLKQGKQSISLEPGGQFELSGAPLETLHQTCAEVNSHLYQVKAVAEEMGIGFLGTGFQPKWGLKDIPIMPKGRYEIIRNYMPKVGSLGLDMMFRTCTVQVNLDFSSEADMIRKFRAGLALQPIATALFANSPFTEGKPNGYLSKRSHIWTDTDNNRAGMLPFVFDDSFGFEQYVDYALDVPMYFVYRKKKYVDCTGLSFRDFMNGKLPPIPGEYPTLNDWENHLTTIFPEVRLKRYLEMRGADGGPWRRLCALPAFWVGILYDEGSLQSVLDMTFDWTAEERDMLRNKVPKSGLKTPFRDGLLMHVAQDVVKLAKEGLERRGFKETGFLNEVAEVVKTGVTPAEKLLELYHGKWGQSVDPIFEELLY</sequence>
<organism>
    <name type="scientific">Solanum lycopersicum</name>
    <name type="common">Tomato</name>
    <name type="synonym">Lycopersicon esculentum</name>
    <dbReference type="NCBI Taxonomy" id="4081"/>
    <lineage>
        <taxon>Eukaryota</taxon>
        <taxon>Viridiplantae</taxon>
        <taxon>Streptophyta</taxon>
        <taxon>Embryophyta</taxon>
        <taxon>Tracheophyta</taxon>
        <taxon>Spermatophyta</taxon>
        <taxon>Magnoliopsida</taxon>
        <taxon>eudicotyledons</taxon>
        <taxon>Gunneridae</taxon>
        <taxon>Pentapetalae</taxon>
        <taxon>asterids</taxon>
        <taxon>lamiids</taxon>
        <taxon>Solanales</taxon>
        <taxon>Solanaceae</taxon>
        <taxon>Solanoideae</taxon>
        <taxon>Solaneae</taxon>
        <taxon>Solanum</taxon>
        <taxon>Solanum subgen. Lycopersicon</taxon>
    </lineage>
</organism>
<protein>
    <recommendedName>
        <fullName>Glutamate--cysteine ligase, chloroplastic</fullName>
        <ecNumber>6.3.2.2</ecNumber>
    </recommendedName>
    <alternativeName>
        <fullName>Gamma-ECS</fullName>
        <shortName>GCS</shortName>
    </alternativeName>
    <alternativeName>
        <fullName>Gamma-glutamylcysteine synthetase</fullName>
    </alternativeName>
</protein>
<name>GSH1_SOLLC</name>
<dbReference type="EC" id="6.3.2.2"/>
<dbReference type="EMBL" id="AF017983">
    <property type="protein sequence ID" value="AAB71230.1"/>
    <property type="molecule type" value="mRNA"/>
</dbReference>
<dbReference type="PIR" id="T04332">
    <property type="entry name" value="T04332"/>
</dbReference>
<dbReference type="RefSeq" id="NP_001234010.2">
    <property type="nucleotide sequence ID" value="NM_001247081.2"/>
</dbReference>
<dbReference type="SMR" id="O22493"/>
<dbReference type="FunCoup" id="O22493">
    <property type="interactions" value="1491"/>
</dbReference>
<dbReference type="STRING" id="4081.O22493"/>
<dbReference type="PaxDb" id="4081-Solyc08g081010.2.1"/>
<dbReference type="GeneID" id="543536"/>
<dbReference type="KEGG" id="sly:543536"/>
<dbReference type="eggNOG" id="ENOG502QVEN">
    <property type="taxonomic scope" value="Eukaryota"/>
</dbReference>
<dbReference type="InParanoid" id="O22493"/>
<dbReference type="OrthoDB" id="2012853at2759"/>
<dbReference type="UniPathway" id="UPA00142">
    <property type="reaction ID" value="UER00209"/>
</dbReference>
<dbReference type="Proteomes" id="UP000004994">
    <property type="component" value="Unplaced"/>
</dbReference>
<dbReference type="ExpressionAtlas" id="O22493">
    <property type="expression patterns" value="baseline and differential"/>
</dbReference>
<dbReference type="GO" id="GO:0009507">
    <property type="term" value="C:chloroplast"/>
    <property type="evidence" value="ECO:0007669"/>
    <property type="project" value="UniProtKB-SubCell"/>
</dbReference>
<dbReference type="GO" id="GO:0005524">
    <property type="term" value="F:ATP binding"/>
    <property type="evidence" value="ECO:0007669"/>
    <property type="project" value="UniProtKB-KW"/>
</dbReference>
<dbReference type="GO" id="GO:0004357">
    <property type="term" value="F:glutamate-cysteine ligase activity"/>
    <property type="evidence" value="ECO:0007669"/>
    <property type="project" value="UniProtKB-EC"/>
</dbReference>
<dbReference type="GO" id="GO:0006750">
    <property type="term" value="P:glutathione biosynthetic process"/>
    <property type="evidence" value="ECO:0007669"/>
    <property type="project" value="UniProtKB-UniPathway"/>
</dbReference>
<dbReference type="FunFam" id="3.30.590.20:FF:000003">
    <property type="entry name" value="Glutamate--cysteine ligase"/>
    <property type="match status" value="1"/>
</dbReference>
<dbReference type="Gene3D" id="3.30.590.20">
    <property type="match status" value="1"/>
</dbReference>
<dbReference type="InterPro" id="IPR035434">
    <property type="entry name" value="GCL_bact_plant"/>
</dbReference>
<dbReference type="InterPro" id="IPR006336">
    <property type="entry name" value="GCS2"/>
</dbReference>
<dbReference type="InterPro" id="IPR014746">
    <property type="entry name" value="Gln_synth/guanido_kin_cat_dom"/>
</dbReference>
<dbReference type="InterPro" id="IPR011556">
    <property type="entry name" value="Glut_cys_lig_pln_type"/>
</dbReference>
<dbReference type="NCBIfam" id="TIGR01436">
    <property type="entry name" value="glu_cys_lig_pln"/>
    <property type="match status" value="1"/>
</dbReference>
<dbReference type="PANTHER" id="PTHR34378">
    <property type="entry name" value="GLUTAMATE--CYSTEINE LIGASE, CHLOROPLASTIC"/>
    <property type="match status" value="1"/>
</dbReference>
<dbReference type="PANTHER" id="PTHR34378:SF1">
    <property type="entry name" value="GLUTAMATE--CYSTEINE LIGASE, CHLOROPLASTIC"/>
    <property type="match status" value="1"/>
</dbReference>
<dbReference type="Pfam" id="PF04107">
    <property type="entry name" value="GCS2"/>
    <property type="match status" value="1"/>
</dbReference>
<dbReference type="PIRSF" id="PIRSF017901">
    <property type="entry name" value="GCL"/>
    <property type="match status" value="1"/>
</dbReference>
<dbReference type="SUPFAM" id="SSF55931">
    <property type="entry name" value="Glutamine synthetase/guanido kinase"/>
    <property type="match status" value="1"/>
</dbReference>
<keyword id="KW-0067">ATP-binding</keyword>
<keyword id="KW-0150">Chloroplast</keyword>
<keyword id="KW-1015">Disulfide bond</keyword>
<keyword id="KW-0317">Glutathione biosynthesis</keyword>
<keyword id="KW-0436">Ligase</keyword>
<keyword id="KW-0547">Nucleotide-binding</keyword>
<keyword id="KW-0934">Plastid</keyword>
<keyword id="KW-1185">Reference proteome</keyword>
<keyword id="KW-0809">Transit peptide</keyword>
<proteinExistence type="evidence at transcript level"/>